<accession>B8E246</accession>
<reference key="1">
    <citation type="journal article" date="2016" name="Front. Microbiol.">
        <title>The complete genome sequence of hyperthermophile Dictyoglomus turgidum DSM 6724 reveals a specialized carbohydrate fermentor.</title>
        <authorList>
            <person name="Brumm P.J."/>
            <person name="Gowda K."/>
            <person name="Robb F.T."/>
            <person name="Mead D.A."/>
        </authorList>
    </citation>
    <scope>NUCLEOTIDE SEQUENCE [LARGE SCALE GENOMIC DNA]</scope>
    <source>
        <strain>DSM 6724 / Z-1310</strain>
    </source>
</reference>
<comment type="function">
    <text evidence="1">Involved in transcription antitermination. Required for transcription of ribosomal RNA (rRNA) genes. Binds specifically to the boxA antiterminator sequence of the ribosomal RNA (rrn) operons.</text>
</comment>
<comment type="similarity">
    <text evidence="1">Belongs to the NusB family.</text>
</comment>
<organism>
    <name type="scientific">Dictyoglomus turgidum (strain DSM 6724 / Z-1310)</name>
    <dbReference type="NCBI Taxonomy" id="515635"/>
    <lineage>
        <taxon>Bacteria</taxon>
        <taxon>Pseudomonadati</taxon>
        <taxon>Dictyoglomota</taxon>
        <taxon>Dictyoglomia</taxon>
        <taxon>Dictyoglomales</taxon>
        <taxon>Dictyoglomaceae</taxon>
        <taxon>Dictyoglomus</taxon>
    </lineage>
</organism>
<evidence type="ECO:0000255" key="1">
    <source>
        <dbReference type="HAMAP-Rule" id="MF_00073"/>
    </source>
</evidence>
<name>NUSB_DICTD</name>
<proteinExistence type="inferred from homology"/>
<dbReference type="EMBL" id="CP001251">
    <property type="protein sequence ID" value="ACK42323.1"/>
    <property type="molecule type" value="Genomic_DNA"/>
</dbReference>
<dbReference type="RefSeq" id="WP_012583406.1">
    <property type="nucleotide sequence ID" value="NC_011661.1"/>
</dbReference>
<dbReference type="RefSeq" id="YP_002352937.1">
    <property type="nucleotide sequence ID" value="NC_011661.1"/>
</dbReference>
<dbReference type="SMR" id="B8E246"/>
<dbReference type="FunCoup" id="B8E246">
    <property type="interactions" value="255"/>
</dbReference>
<dbReference type="STRING" id="515635.Dtur_1043"/>
<dbReference type="EnsemblBacteria" id="ACK42323">
    <property type="protein sequence ID" value="ACK42323"/>
    <property type="gene ID" value="Dtur_1043"/>
</dbReference>
<dbReference type="KEGG" id="dtu:Dtur_1043"/>
<dbReference type="eggNOG" id="COG0781">
    <property type="taxonomic scope" value="Bacteria"/>
</dbReference>
<dbReference type="HOGENOM" id="CLU_087843_3_0_0"/>
<dbReference type="InParanoid" id="B8E246"/>
<dbReference type="OrthoDB" id="9811381at2"/>
<dbReference type="Proteomes" id="UP000007719">
    <property type="component" value="Chromosome"/>
</dbReference>
<dbReference type="GO" id="GO:0005829">
    <property type="term" value="C:cytosol"/>
    <property type="evidence" value="ECO:0000318"/>
    <property type="project" value="GO_Central"/>
</dbReference>
<dbReference type="GO" id="GO:0003723">
    <property type="term" value="F:RNA binding"/>
    <property type="evidence" value="ECO:0007669"/>
    <property type="project" value="UniProtKB-UniRule"/>
</dbReference>
<dbReference type="GO" id="GO:0006353">
    <property type="term" value="P:DNA-templated transcription termination"/>
    <property type="evidence" value="ECO:0007669"/>
    <property type="project" value="UniProtKB-UniRule"/>
</dbReference>
<dbReference type="GO" id="GO:0031564">
    <property type="term" value="P:transcription antitermination"/>
    <property type="evidence" value="ECO:0007669"/>
    <property type="project" value="UniProtKB-KW"/>
</dbReference>
<dbReference type="Gene3D" id="1.10.940.10">
    <property type="entry name" value="NusB-like"/>
    <property type="match status" value="1"/>
</dbReference>
<dbReference type="HAMAP" id="MF_00073">
    <property type="entry name" value="NusB"/>
    <property type="match status" value="1"/>
</dbReference>
<dbReference type="InterPro" id="IPR035926">
    <property type="entry name" value="NusB-like_sf"/>
</dbReference>
<dbReference type="InterPro" id="IPR011605">
    <property type="entry name" value="NusB_fam"/>
</dbReference>
<dbReference type="InterPro" id="IPR006027">
    <property type="entry name" value="NusB_RsmB_TIM44"/>
</dbReference>
<dbReference type="NCBIfam" id="TIGR01951">
    <property type="entry name" value="nusB"/>
    <property type="match status" value="1"/>
</dbReference>
<dbReference type="PANTHER" id="PTHR11078:SF3">
    <property type="entry name" value="ANTITERMINATION NUSB DOMAIN-CONTAINING PROTEIN"/>
    <property type="match status" value="1"/>
</dbReference>
<dbReference type="PANTHER" id="PTHR11078">
    <property type="entry name" value="N UTILIZATION SUBSTANCE PROTEIN B-RELATED"/>
    <property type="match status" value="1"/>
</dbReference>
<dbReference type="Pfam" id="PF01029">
    <property type="entry name" value="NusB"/>
    <property type="match status" value="1"/>
</dbReference>
<dbReference type="SUPFAM" id="SSF48013">
    <property type="entry name" value="NusB-like"/>
    <property type="match status" value="1"/>
</dbReference>
<sequence length="144" mass="16729">MSKERTRCREKVLEFLFQKDLGQEIEVDFSDFSPQGQVFAYKLYDGALYYKDLADEIISKFSKNWKLERIGTIEKNILRMAIAEMFTFSDIPQGVTVNEAVELAKKYVSPEAGRFINGILRNIVRNWDEVKKLKEGFVDVTSEN</sequence>
<feature type="chain" id="PRO_1000192437" description="Transcription antitermination protein NusB">
    <location>
        <begin position="1"/>
        <end position="144"/>
    </location>
</feature>
<keyword id="KW-1185">Reference proteome</keyword>
<keyword id="KW-0694">RNA-binding</keyword>
<keyword id="KW-0804">Transcription</keyword>
<keyword id="KW-0889">Transcription antitermination</keyword>
<keyword id="KW-0805">Transcription regulation</keyword>
<gene>
    <name evidence="1" type="primary">nusB</name>
    <name type="ordered locus">Dtur_1043</name>
</gene>
<protein>
    <recommendedName>
        <fullName evidence="1">Transcription antitermination protein NusB</fullName>
    </recommendedName>
    <alternativeName>
        <fullName evidence="1">Antitermination factor NusB</fullName>
    </alternativeName>
</protein>